<feature type="propeptide" id="PRO_0000026878" evidence="1">
    <location>
        <begin position="1"/>
        <end position="13"/>
    </location>
</feature>
<feature type="chain" id="PRO_0000026879" description="Germination protease">
    <location>
        <begin position="14"/>
        <end position="367"/>
    </location>
</feature>
<feature type="region of interest" description="Disordered" evidence="2">
    <location>
        <begin position="267"/>
        <end position="287"/>
    </location>
</feature>
<protein>
    <recommendedName>
        <fullName evidence="1">Germination protease</fullName>
        <ecNumber evidence="1">3.4.24.78</ecNumber>
    </recommendedName>
    <alternativeName>
        <fullName evidence="1">GPR endopeptidase</fullName>
    </alternativeName>
    <alternativeName>
        <fullName evidence="1">Germination proteinase</fullName>
    </alternativeName>
    <alternativeName>
        <fullName evidence="1">Spore protease</fullName>
    </alternativeName>
</protein>
<organism>
    <name type="scientific">Oceanobacillus iheyensis (strain DSM 14371 / CIP 107618 / JCM 11309 / KCTC 3954 / HTE831)</name>
    <dbReference type="NCBI Taxonomy" id="221109"/>
    <lineage>
        <taxon>Bacteria</taxon>
        <taxon>Bacillati</taxon>
        <taxon>Bacillota</taxon>
        <taxon>Bacilli</taxon>
        <taxon>Bacillales</taxon>
        <taxon>Bacillaceae</taxon>
        <taxon>Oceanobacillus</taxon>
    </lineage>
</organism>
<evidence type="ECO:0000255" key="1">
    <source>
        <dbReference type="HAMAP-Rule" id="MF_00626"/>
    </source>
</evidence>
<evidence type="ECO:0000256" key="2">
    <source>
        <dbReference type="SAM" id="MobiDB-lite"/>
    </source>
</evidence>
<accession>Q8CXC9</accession>
<dbReference type="EC" id="3.4.24.78" evidence="1"/>
<dbReference type="EMBL" id="BA000028">
    <property type="protein sequence ID" value="BAC13931.1"/>
    <property type="molecule type" value="Genomic_DNA"/>
</dbReference>
<dbReference type="RefSeq" id="WP_011066372.1">
    <property type="nucleotide sequence ID" value="NC_004193.1"/>
</dbReference>
<dbReference type="SMR" id="Q8CXC9"/>
<dbReference type="STRING" id="221109.gene:10734221"/>
<dbReference type="MEROPS" id="A25.001"/>
<dbReference type="KEGG" id="oih:OB1975"/>
<dbReference type="eggNOG" id="COG0680">
    <property type="taxonomic scope" value="Bacteria"/>
</dbReference>
<dbReference type="HOGENOM" id="CLU_055087_1_0_9"/>
<dbReference type="OrthoDB" id="9777293at2"/>
<dbReference type="PhylomeDB" id="Q8CXC9"/>
<dbReference type="Proteomes" id="UP000000822">
    <property type="component" value="Chromosome"/>
</dbReference>
<dbReference type="GO" id="GO:0004222">
    <property type="term" value="F:metalloendopeptidase activity"/>
    <property type="evidence" value="ECO:0007669"/>
    <property type="project" value="UniProtKB-UniRule"/>
</dbReference>
<dbReference type="GO" id="GO:0006508">
    <property type="term" value="P:proteolysis"/>
    <property type="evidence" value="ECO:0007669"/>
    <property type="project" value="UniProtKB-UniRule"/>
</dbReference>
<dbReference type="GO" id="GO:0009847">
    <property type="term" value="P:spore germination"/>
    <property type="evidence" value="ECO:0007669"/>
    <property type="project" value="UniProtKB-UniRule"/>
</dbReference>
<dbReference type="Gene3D" id="3.40.50.1450">
    <property type="entry name" value="HybD-like"/>
    <property type="match status" value="1"/>
</dbReference>
<dbReference type="HAMAP" id="MF_00626">
    <property type="entry name" value="Germination_prot"/>
    <property type="match status" value="1"/>
</dbReference>
<dbReference type="InterPro" id="IPR023430">
    <property type="entry name" value="Pept_HybD-like_dom_sf"/>
</dbReference>
<dbReference type="InterPro" id="IPR005080">
    <property type="entry name" value="Peptidase_A25"/>
</dbReference>
<dbReference type="NCBIfam" id="TIGR01441">
    <property type="entry name" value="GPR"/>
    <property type="match status" value="1"/>
</dbReference>
<dbReference type="Pfam" id="PF03418">
    <property type="entry name" value="Peptidase_A25"/>
    <property type="match status" value="1"/>
</dbReference>
<dbReference type="PIRSF" id="PIRSF019549">
    <property type="entry name" value="Peptidase_A25"/>
    <property type="match status" value="1"/>
</dbReference>
<dbReference type="SUPFAM" id="SSF53163">
    <property type="entry name" value="HybD-like"/>
    <property type="match status" value="1"/>
</dbReference>
<keyword id="KW-0378">Hydrolase</keyword>
<keyword id="KW-0645">Protease</keyword>
<keyword id="KW-1185">Reference proteome</keyword>
<keyword id="KW-0865">Zymogen</keyword>
<proteinExistence type="inferred from homology"/>
<sequence>MEEQQIPFQVRTDLAIEAKDMYTESKPEETNDKEIKGVTFKERSVKDIKVSYVDIDEEGEKLLGKKPGSYVTIYADGVKKQDTDRQGQAAQVLAKELEDLMRKNNVTKESTCLVVGLGNWNVTPDALGPMTVEKVLVTSHLFRLQYETVAQGYRDVAAVTPGVMGVTGIETSDIIFGIVEKYKPDLVIAVDALASRSINRVNETIQLSDTGIHPGSGVGNKRKEISKKTLGIPVIAIGVPTVVDAVTITSDTIDYVLKHFGREWKEKDDPSKSLTPAGMSFGNRKLTDEDLPNMEKRKTVLGIVGELSDEEKRKLITEVLTPLGHNLMVTPKEVDGFMIDMAEVLANGINAALHEKVDVDNFANYSR</sequence>
<gene>
    <name evidence="1" type="primary">gpr</name>
    <name type="ordered locus">OB1975</name>
</gene>
<reference key="1">
    <citation type="journal article" date="2002" name="Nucleic Acids Res.">
        <title>Genome sequence of Oceanobacillus iheyensis isolated from the Iheya Ridge and its unexpected adaptive capabilities to extreme environments.</title>
        <authorList>
            <person name="Takami H."/>
            <person name="Takaki Y."/>
            <person name="Uchiyama I."/>
        </authorList>
    </citation>
    <scope>NUCLEOTIDE SEQUENCE [LARGE SCALE GENOMIC DNA]</scope>
    <source>
        <strain>DSM 14371 / CIP 107618 / JCM 11309 / KCTC 3954 / HTE831</strain>
    </source>
</reference>
<comment type="function">
    <text evidence="1">Initiates the rapid degradation of small, acid-soluble proteins during spore germination.</text>
</comment>
<comment type="catalytic activity">
    <reaction evidence="1">
        <text>Endopeptidase action with P4 Glu or Asp, P1 preferably Glu &gt; Asp, P1' hydrophobic and P2' Ala.</text>
        <dbReference type="EC" id="3.4.24.78"/>
    </reaction>
</comment>
<comment type="subunit">
    <text evidence="1">Homotetramer.</text>
</comment>
<comment type="PTM">
    <text evidence="1">Autoproteolytically processed. The inactive tetrameric zymogen termed p46 autoprocesses to a smaller form termed p41, which is active only during spore germination.</text>
</comment>
<comment type="similarity">
    <text evidence="1">Belongs to the peptidase A25 family.</text>
</comment>
<name>GPR_OCEIH</name>